<dbReference type="EC" id="2.3.1.-"/>
<dbReference type="EMBL" id="AE000782">
    <property type="protein sequence ID" value="AAB90723.1"/>
    <property type="molecule type" value="Genomic_DNA"/>
</dbReference>
<dbReference type="PIR" id="A69315">
    <property type="entry name" value="A69315"/>
</dbReference>
<dbReference type="RefSeq" id="WP_010878028.1">
    <property type="nucleotide sequence ID" value="NC_000917.1"/>
</dbReference>
<dbReference type="SMR" id="O29729"/>
<dbReference type="STRING" id="224325.AF_0521"/>
<dbReference type="PaxDb" id="224325-AF_0521"/>
<dbReference type="EnsemblBacteria" id="AAB90723">
    <property type="protein sequence ID" value="AAB90723"/>
    <property type="gene ID" value="AF_0521"/>
</dbReference>
<dbReference type="GeneID" id="1483738"/>
<dbReference type="KEGG" id="afu:AF_0521"/>
<dbReference type="eggNOG" id="arCOG00826">
    <property type="taxonomic scope" value="Archaea"/>
</dbReference>
<dbReference type="HOGENOM" id="CLU_013985_36_0_2"/>
<dbReference type="OrthoDB" id="38613at2157"/>
<dbReference type="PhylomeDB" id="O29729"/>
<dbReference type="Proteomes" id="UP000002199">
    <property type="component" value="Chromosome"/>
</dbReference>
<dbReference type="GO" id="GO:0016747">
    <property type="term" value="F:acyltransferase activity, transferring groups other than amino-acyl groups"/>
    <property type="evidence" value="ECO:0007669"/>
    <property type="project" value="InterPro"/>
</dbReference>
<dbReference type="CDD" id="cd04301">
    <property type="entry name" value="NAT_SF"/>
    <property type="match status" value="1"/>
</dbReference>
<dbReference type="FunFam" id="3.40.630.30:FF:000282">
    <property type="entry name" value="GCN5-related N-acetyltransferase"/>
    <property type="match status" value="1"/>
</dbReference>
<dbReference type="Gene3D" id="3.40.630.30">
    <property type="match status" value="1"/>
</dbReference>
<dbReference type="InterPro" id="IPR016181">
    <property type="entry name" value="Acyl_CoA_acyltransferase"/>
</dbReference>
<dbReference type="InterPro" id="IPR050832">
    <property type="entry name" value="Bact_Acetyltransf"/>
</dbReference>
<dbReference type="InterPro" id="IPR000182">
    <property type="entry name" value="GNAT_dom"/>
</dbReference>
<dbReference type="PANTHER" id="PTHR43877:SF2">
    <property type="entry name" value="AMINOALKYLPHOSPHONATE N-ACETYLTRANSFERASE-RELATED"/>
    <property type="match status" value="1"/>
</dbReference>
<dbReference type="PANTHER" id="PTHR43877">
    <property type="entry name" value="AMINOALKYLPHOSPHONATE N-ACETYLTRANSFERASE-RELATED-RELATED"/>
    <property type="match status" value="1"/>
</dbReference>
<dbReference type="Pfam" id="PF00583">
    <property type="entry name" value="Acetyltransf_1"/>
    <property type="match status" value="1"/>
</dbReference>
<dbReference type="SUPFAM" id="SSF55729">
    <property type="entry name" value="Acyl-CoA N-acyltransferases (Nat)"/>
    <property type="match status" value="1"/>
</dbReference>
<dbReference type="PROSITE" id="PS51186">
    <property type="entry name" value="GNAT"/>
    <property type="match status" value="1"/>
</dbReference>
<organism>
    <name type="scientific">Archaeoglobus fulgidus (strain ATCC 49558 / DSM 4304 / JCM 9628 / NBRC 100126 / VC-16)</name>
    <dbReference type="NCBI Taxonomy" id="224325"/>
    <lineage>
        <taxon>Archaea</taxon>
        <taxon>Methanobacteriati</taxon>
        <taxon>Methanobacteriota</taxon>
        <taxon>Archaeoglobi</taxon>
        <taxon>Archaeoglobales</taxon>
        <taxon>Archaeoglobaceae</taxon>
        <taxon>Archaeoglobus</taxon>
    </lineage>
</organism>
<name>Y521_ARCFU</name>
<gene>
    <name type="ordered locus">AF_0521</name>
</gene>
<accession>O29729</accession>
<protein>
    <recommendedName>
        <fullName>Uncharacterized N-acetyltransferase AF_0521</fullName>
        <ecNumber>2.3.1.-</ecNumber>
    </recommendedName>
</protein>
<feature type="chain" id="PRO_0000074631" description="Uncharacterized N-acetyltransferase AF_0521">
    <location>
        <begin position="1"/>
        <end position="147"/>
    </location>
</feature>
<feature type="domain" description="N-acetyltransferase" evidence="1">
    <location>
        <begin position="1"/>
        <end position="147"/>
    </location>
</feature>
<keyword id="KW-0012">Acyltransferase</keyword>
<keyword id="KW-1185">Reference proteome</keyword>
<keyword id="KW-0808">Transferase</keyword>
<evidence type="ECO:0000255" key="1">
    <source>
        <dbReference type="PROSITE-ProRule" id="PRU00532"/>
    </source>
</evidence>
<evidence type="ECO:0000305" key="2"/>
<proteinExistence type="inferred from homology"/>
<sequence>MEIRRADKDDLDDFVRVYVESYRGLEDYAYTRKRDVKNYFKWLLSRDKDGVMVAEIDGEAVGFVACDTNWFSIFERKKVGEIHELFVLPEFRGEGIGAKLMEKALEYALERNRKVAELWVGRTNYRARRFYASQDLRRPESGGSGSE</sequence>
<comment type="similarity">
    <text evidence="2">Belongs to the acetyltransferase family.</text>
</comment>
<reference key="1">
    <citation type="journal article" date="1997" name="Nature">
        <title>The complete genome sequence of the hyperthermophilic, sulphate-reducing archaeon Archaeoglobus fulgidus.</title>
        <authorList>
            <person name="Klenk H.-P."/>
            <person name="Clayton R.A."/>
            <person name="Tomb J.-F."/>
            <person name="White O."/>
            <person name="Nelson K.E."/>
            <person name="Ketchum K.A."/>
            <person name="Dodson R.J."/>
            <person name="Gwinn M.L."/>
            <person name="Hickey E.K."/>
            <person name="Peterson J.D."/>
            <person name="Richardson D.L."/>
            <person name="Kerlavage A.R."/>
            <person name="Graham D.E."/>
            <person name="Kyrpides N.C."/>
            <person name="Fleischmann R.D."/>
            <person name="Quackenbush J."/>
            <person name="Lee N.H."/>
            <person name="Sutton G.G."/>
            <person name="Gill S.R."/>
            <person name="Kirkness E.F."/>
            <person name="Dougherty B.A."/>
            <person name="McKenney K."/>
            <person name="Adams M.D."/>
            <person name="Loftus B.J."/>
            <person name="Peterson S.N."/>
            <person name="Reich C.I."/>
            <person name="McNeil L.K."/>
            <person name="Badger J.H."/>
            <person name="Glodek A."/>
            <person name="Zhou L."/>
            <person name="Overbeek R."/>
            <person name="Gocayne J.D."/>
            <person name="Weidman J.F."/>
            <person name="McDonald L.A."/>
            <person name="Utterback T.R."/>
            <person name="Cotton M.D."/>
            <person name="Spriggs T."/>
            <person name="Artiach P."/>
            <person name="Kaine B.P."/>
            <person name="Sykes S.M."/>
            <person name="Sadow P.W."/>
            <person name="D'Andrea K.P."/>
            <person name="Bowman C."/>
            <person name="Fujii C."/>
            <person name="Garland S.A."/>
            <person name="Mason T.M."/>
            <person name="Olsen G.J."/>
            <person name="Fraser C.M."/>
            <person name="Smith H.O."/>
            <person name="Woese C.R."/>
            <person name="Venter J.C."/>
        </authorList>
    </citation>
    <scope>NUCLEOTIDE SEQUENCE [LARGE SCALE GENOMIC DNA]</scope>
    <source>
        <strain>ATCC 49558 / DSM 4304 / JCM 9628 / NBRC 100126 / VC-16</strain>
    </source>
</reference>